<sequence length="155" mass="17949">MFGMGFFEILVVLVVAIIFLGPEKFPQAVVDVVKFFRAVKKTLNDAKDTLDKEINIEEIKKETLEYQKLFEDKIEGLKGVRIEELEDAKIVAEKEIKSVQDLMQDYKQSLENNAPPKHLNKEVSNREVFHNEPPKEIELIANNNTTKHDKEKEHV</sequence>
<name>TATB_HELAH</name>
<comment type="function">
    <text evidence="1">Part of the twin-arginine translocation (Tat) system that transports large folded proteins containing a characteristic twin-arginine motif in their signal peptide across membranes. Together with TatC, TatB is part of a receptor directly interacting with Tat signal peptides. TatB may form an oligomeric binding site that transiently accommodates folded Tat precursor proteins before their translocation.</text>
</comment>
<comment type="subunit">
    <text evidence="1">The Tat system comprises two distinct complexes: a TatABC complex, containing multiple copies of TatA, TatB and TatC subunits, and a separate TatA complex, containing only TatA subunits. Substrates initially bind to the TatABC complex, which probably triggers association of the separate TatA complex to form the active translocon.</text>
</comment>
<comment type="subcellular location">
    <subcellularLocation>
        <location evidence="1">Cell inner membrane</location>
        <topology evidence="1">Single-pass membrane protein</topology>
    </subcellularLocation>
</comment>
<comment type="similarity">
    <text evidence="1">Belongs to the TatB family.</text>
</comment>
<feature type="chain" id="PRO_0000301175" description="Sec-independent protein translocase protein TatB">
    <location>
        <begin position="1"/>
        <end position="155"/>
    </location>
</feature>
<feature type="transmembrane region" description="Helical" evidence="1">
    <location>
        <begin position="1"/>
        <end position="21"/>
    </location>
</feature>
<feature type="region of interest" description="Disordered" evidence="2">
    <location>
        <begin position="109"/>
        <end position="155"/>
    </location>
</feature>
<feature type="compositionally biased region" description="Basic and acidic residues" evidence="2">
    <location>
        <begin position="119"/>
        <end position="138"/>
    </location>
</feature>
<feature type="compositionally biased region" description="Basic and acidic residues" evidence="2">
    <location>
        <begin position="146"/>
        <end position="155"/>
    </location>
</feature>
<evidence type="ECO:0000255" key="1">
    <source>
        <dbReference type="HAMAP-Rule" id="MF_00237"/>
    </source>
</evidence>
<evidence type="ECO:0000256" key="2">
    <source>
        <dbReference type="SAM" id="MobiDB-lite"/>
    </source>
</evidence>
<reference key="1">
    <citation type="journal article" date="2006" name="PLoS Genet.">
        <title>Who ate whom? Adaptive Helicobacter genomic changes that accompanied a host jump from early humans to large felines.</title>
        <authorList>
            <person name="Eppinger M."/>
            <person name="Baar C."/>
            <person name="Linz B."/>
            <person name="Raddatz G."/>
            <person name="Lanz C."/>
            <person name="Keller H."/>
            <person name="Morelli G."/>
            <person name="Gressmann H."/>
            <person name="Achtman M."/>
            <person name="Schuster S.C."/>
        </authorList>
    </citation>
    <scope>NUCLEOTIDE SEQUENCE [LARGE SCALE GENOMIC DNA]</scope>
    <source>
        <strain>Sheeba</strain>
    </source>
</reference>
<keyword id="KW-0997">Cell inner membrane</keyword>
<keyword id="KW-1003">Cell membrane</keyword>
<keyword id="KW-0472">Membrane</keyword>
<keyword id="KW-0653">Protein transport</keyword>
<keyword id="KW-0811">Translocation</keyword>
<keyword id="KW-0812">Transmembrane</keyword>
<keyword id="KW-1133">Transmembrane helix</keyword>
<keyword id="KW-0813">Transport</keyword>
<dbReference type="EMBL" id="AM260522">
    <property type="protein sequence ID" value="CAJ99930.1"/>
    <property type="molecule type" value="Genomic_DNA"/>
</dbReference>
<dbReference type="RefSeq" id="WP_011578037.1">
    <property type="nucleotide sequence ID" value="NC_008229.1"/>
</dbReference>
<dbReference type="SMR" id="Q17WP6"/>
<dbReference type="STRING" id="382638.Hac_1171"/>
<dbReference type="GeneID" id="31758522"/>
<dbReference type="KEGG" id="hac:Hac_1171"/>
<dbReference type="eggNOG" id="COG1826">
    <property type="taxonomic scope" value="Bacteria"/>
</dbReference>
<dbReference type="HOGENOM" id="CLU_086034_0_2_7"/>
<dbReference type="OrthoDB" id="5373084at2"/>
<dbReference type="BioCyc" id="HACI382638:HAC_RS05050-MONOMER"/>
<dbReference type="Proteomes" id="UP000000775">
    <property type="component" value="Chromosome"/>
</dbReference>
<dbReference type="GO" id="GO:0033281">
    <property type="term" value="C:TAT protein transport complex"/>
    <property type="evidence" value="ECO:0007669"/>
    <property type="project" value="UniProtKB-UniRule"/>
</dbReference>
<dbReference type="GO" id="GO:0008320">
    <property type="term" value="F:protein transmembrane transporter activity"/>
    <property type="evidence" value="ECO:0007669"/>
    <property type="project" value="UniProtKB-UniRule"/>
</dbReference>
<dbReference type="GO" id="GO:0043953">
    <property type="term" value="P:protein transport by the Tat complex"/>
    <property type="evidence" value="ECO:0007669"/>
    <property type="project" value="UniProtKB-UniRule"/>
</dbReference>
<dbReference type="Gene3D" id="1.20.5.3310">
    <property type="match status" value="1"/>
</dbReference>
<dbReference type="HAMAP" id="MF_00237">
    <property type="entry name" value="TatB"/>
    <property type="match status" value="1"/>
</dbReference>
<dbReference type="InterPro" id="IPR018448">
    <property type="entry name" value="TatB"/>
</dbReference>
<dbReference type="NCBIfam" id="TIGR01410">
    <property type="entry name" value="tatB"/>
    <property type="match status" value="1"/>
</dbReference>
<dbReference type="PANTHER" id="PTHR33162">
    <property type="entry name" value="SEC-INDEPENDENT PROTEIN TRANSLOCASE PROTEIN TATA, CHLOROPLASTIC"/>
    <property type="match status" value="1"/>
</dbReference>
<dbReference type="PANTHER" id="PTHR33162:SF1">
    <property type="entry name" value="SEC-INDEPENDENT PROTEIN TRANSLOCASE PROTEIN TATA, CHLOROPLASTIC"/>
    <property type="match status" value="1"/>
</dbReference>
<dbReference type="PRINTS" id="PR01506">
    <property type="entry name" value="TATBPROTEIN"/>
</dbReference>
<protein>
    <recommendedName>
        <fullName evidence="1">Sec-independent protein translocase protein TatB</fullName>
    </recommendedName>
</protein>
<proteinExistence type="inferred from homology"/>
<gene>
    <name evidence="1" type="primary">tatB</name>
    <name type="ordered locus">Hac_1171</name>
</gene>
<organism>
    <name type="scientific">Helicobacter acinonychis (strain Sheeba)</name>
    <dbReference type="NCBI Taxonomy" id="382638"/>
    <lineage>
        <taxon>Bacteria</taxon>
        <taxon>Pseudomonadati</taxon>
        <taxon>Campylobacterota</taxon>
        <taxon>Epsilonproteobacteria</taxon>
        <taxon>Campylobacterales</taxon>
        <taxon>Helicobacteraceae</taxon>
        <taxon>Helicobacter</taxon>
    </lineage>
</organism>
<accession>Q17WP6</accession>